<reference key="1">
    <citation type="journal article" date="1988" name="Nucleic Acids Res.">
        <title>Gene for the diphtheria toxin-susceptible elongation factor 2 from Methanococcus vannielii.</title>
        <authorList>
            <person name="Lechner K."/>
            <person name="Heller G."/>
            <person name="Bueck A."/>
        </authorList>
    </citation>
    <scope>NUCLEOTIDE SEQUENCE [GENOMIC DNA]</scope>
</reference>
<reference key="2">
    <citation type="submission" date="2007-06" db="EMBL/GenBank/DDBJ databases">
        <title>Complete sequence of Methanococcus vannielii SB.</title>
        <authorList>
            <consortium name="US DOE Joint Genome Institute"/>
            <person name="Copeland A."/>
            <person name="Lucas S."/>
            <person name="Lapidus A."/>
            <person name="Barry K."/>
            <person name="Glavina del Rio T."/>
            <person name="Dalin E."/>
            <person name="Tice H."/>
            <person name="Pitluck S."/>
            <person name="Chain P."/>
            <person name="Malfatti S."/>
            <person name="Shin M."/>
            <person name="Vergez L."/>
            <person name="Schmutz J."/>
            <person name="Larimer F."/>
            <person name="Land M."/>
            <person name="Hauser L."/>
            <person name="Kyrpides N."/>
            <person name="Anderson I."/>
            <person name="Sieprawska-Lupa M."/>
            <person name="Whitman W.B."/>
            <person name="Richardson P."/>
        </authorList>
    </citation>
    <scope>NUCLEOTIDE SEQUENCE [LARGE SCALE GENOMIC DNA]</scope>
    <source>
        <strain>ATCC 35089 / DSM 1224 / JCM 13029 / OCM 148 / SB</strain>
    </source>
</reference>
<dbReference type="EMBL" id="X12384">
    <property type="protein sequence ID" value="CAA30941.1"/>
    <property type="molecule type" value="Genomic_DNA"/>
</dbReference>
<dbReference type="EMBL" id="CP000742">
    <property type="protein sequence ID" value="ABR54585.1"/>
    <property type="molecule type" value="Genomic_DNA"/>
</dbReference>
<dbReference type="PIR" id="S01289">
    <property type="entry name" value="S01289"/>
</dbReference>
<dbReference type="RefSeq" id="WP_011972487.1">
    <property type="nucleotide sequence ID" value="NC_009634.1"/>
</dbReference>
<dbReference type="SMR" id="P09604"/>
<dbReference type="STRING" id="406327.Mevan_0679"/>
<dbReference type="GeneID" id="5325021"/>
<dbReference type="KEGG" id="mvn:Mevan_0679"/>
<dbReference type="eggNOG" id="arCOG01559">
    <property type="taxonomic scope" value="Archaea"/>
</dbReference>
<dbReference type="HOGENOM" id="CLU_002794_11_1_2"/>
<dbReference type="OrthoDB" id="6290at2157"/>
<dbReference type="Proteomes" id="UP000001107">
    <property type="component" value="Chromosome"/>
</dbReference>
<dbReference type="GO" id="GO:0005829">
    <property type="term" value="C:cytosol"/>
    <property type="evidence" value="ECO:0007669"/>
    <property type="project" value="TreeGrafter"/>
</dbReference>
<dbReference type="GO" id="GO:1990904">
    <property type="term" value="C:ribonucleoprotein complex"/>
    <property type="evidence" value="ECO:0007669"/>
    <property type="project" value="TreeGrafter"/>
</dbReference>
<dbReference type="GO" id="GO:0005525">
    <property type="term" value="F:GTP binding"/>
    <property type="evidence" value="ECO:0007669"/>
    <property type="project" value="UniProtKB-UniRule"/>
</dbReference>
<dbReference type="GO" id="GO:0003924">
    <property type="term" value="F:GTPase activity"/>
    <property type="evidence" value="ECO:0007669"/>
    <property type="project" value="InterPro"/>
</dbReference>
<dbReference type="GO" id="GO:0003746">
    <property type="term" value="F:translation elongation factor activity"/>
    <property type="evidence" value="ECO:0007669"/>
    <property type="project" value="UniProtKB-UniRule"/>
</dbReference>
<dbReference type="CDD" id="cd01681">
    <property type="entry name" value="aeEF2_snRNP_like_IV"/>
    <property type="match status" value="1"/>
</dbReference>
<dbReference type="CDD" id="cd01885">
    <property type="entry name" value="EF2"/>
    <property type="match status" value="1"/>
</dbReference>
<dbReference type="CDD" id="cd16268">
    <property type="entry name" value="EF2_II"/>
    <property type="match status" value="1"/>
</dbReference>
<dbReference type="CDD" id="cd16261">
    <property type="entry name" value="EF2_snRNP_III"/>
    <property type="match status" value="1"/>
</dbReference>
<dbReference type="CDD" id="cd01514">
    <property type="entry name" value="Elongation_Factor_C"/>
    <property type="match status" value="1"/>
</dbReference>
<dbReference type="FunFam" id="3.30.70.240:FF:000010">
    <property type="entry name" value="Elongation factor 2"/>
    <property type="match status" value="1"/>
</dbReference>
<dbReference type="FunFam" id="3.40.50.300:FF:000684">
    <property type="entry name" value="Elongation factor 2"/>
    <property type="match status" value="1"/>
</dbReference>
<dbReference type="FunFam" id="3.30.70.870:FF:000002">
    <property type="entry name" value="Translation elongation factor 2"/>
    <property type="match status" value="1"/>
</dbReference>
<dbReference type="Gene3D" id="3.30.230.10">
    <property type="match status" value="1"/>
</dbReference>
<dbReference type="Gene3D" id="3.30.70.240">
    <property type="match status" value="1"/>
</dbReference>
<dbReference type="Gene3D" id="3.30.70.870">
    <property type="entry name" value="Elongation Factor G (Translational Gtpase), domain 3"/>
    <property type="match status" value="1"/>
</dbReference>
<dbReference type="Gene3D" id="3.40.50.300">
    <property type="entry name" value="P-loop containing nucleotide triphosphate hydrolases"/>
    <property type="match status" value="1"/>
</dbReference>
<dbReference type="Gene3D" id="2.40.30.10">
    <property type="entry name" value="Translation factors"/>
    <property type="match status" value="1"/>
</dbReference>
<dbReference type="HAMAP" id="MF_00054_A">
    <property type="entry name" value="EF_G_EF_2_A"/>
    <property type="match status" value="1"/>
</dbReference>
<dbReference type="InterPro" id="IPR053905">
    <property type="entry name" value="EF-G-like_DII"/>
</dbReference>
<dbReference type="InterPro" id="IPR041095">
    <property type="entry name" value="EFG_II"/>
</dbReference>
<dbReference type="InterPro" id="IPR035647">
    <property type="entry name" value="EFG_III/V"/>
</dbReference>
<dbReference type="InterPro" id="IPR000640">
    <property type="entry name" value="EFG_V-like"/>
</dbReference>
<dbReference type="InterPro" id="IPR031157">
    <property type="entry name" value="G_TR_CS"/>
</dbReference>
<dbReference type="InterPro" id="IPR027417">
    <property type="entry name" value="P-loop_NTPase"/>
</dbReference>
<dbReference type="InterPro" id="IPR020568">
    <property type="entry name" value="Ribosomal_Su5_D2-typ_SF"/>
</dbReference>
<dbReference type="InterPro" id="IPR014721">
    <property type="entry name" value="Ribsml_uS5_D2-typ_fold_subgr"/>
</dbReference>
<dbReference type="InterPro" id="IPR005225">
    <property type="entry name" value="Small_GTP-bd"/>
</dbReference>
<dbReference type="InterPro" id="IPR000795">
    <property type="entry name" value="T_Tr_GTP-bd_dom"/>
</dbReference>
<dbReference type="InterPro" id="IPR009000">
    <property type="entry name" value="Transl_B-barrel_sf"/>
</dbReference>
<dbReference type="InterPro" id="IPR004543">
    <property type="entry name" value="Transl_elong_EFG/EF2_arc"/>
</dbReference>
<dbReference type="InterPro" id="IPR005517">
    <property type="entry name" value="Transl_elong_EFG/EF2_IV"/>
</dbReference>
<dbReference type="NCBIfam" id="TIGR00490">
    <property type="entry name" value="aEF-2"/>
    <property type="match status" value="1"/>
</dbReference>
<dbReference type="NCBIfam" id="TIGR00231">
    <property type="entry name" value="small_GTP"/>
    <property type="match status" value="1"/>
</dbReference>
<dbReference type="PANTHER" id="PTHR42908:SF3">
    <property type="entry name" value="ELONGATION FACTOR-LIKE GTPASE 1"/>
    <property type="match status" value="1"/>
</dbReference>
<dbReference type="PANTHER" id="PTHR42908">
    <property type="entry name" value="TRANSLATION ELONGATION FACTOR-RELATED"/>
    <property type="match status" value="1"/>
</dbReference>
<dbReference type="Pfam" id="PF22042">
    <property type="entry name" value="EF-G_D2"/>
    <property type="match status" value="1"/>
</dbReference>
<dbReference type="Pfam" id="PF00679">
    <property type="entry name" value="EFG_C"/>
    <property type="match status" value="1"/>
</dbReference>
<dbReference type="Pfam" id="PF14492">
    <property type="entry name" value="EFG_III"/>
    <property type="match status" value="1"/>
</dbReference>
<dbReference type="Pfam" id="PF03764">
    <property type="entry name" value="EFG_IV"/>
    <property type="match status" value="1"/>
</dbReference>
<dbReference type="Pfam" id="PF00009">
    <property type="entry name" value="GTP_EFTU"/>
    <property type="match status" value="1"/>
</dbReference>
<dbReference type="PRINTS" id="PR00315">
    <property type="entry name" value="ELONGATNFCT"/>
</dbReference>
<dbReference type="SMART" id="SM00838">
    <property type="entry name" value="EFG_C"/>
    <property type="match status" value="1"/>
</dbReference>
<dbReference type="SMART" id="SM00889">
    <property type="entry name" value="EFG_IV"/>
    <property type="match status" value="1"/>
</dbReference>
<dbReference type="SUPFAM" id="SSF54980">
    <property type="entry name" value="EF-G C-terminal domain-like"/>
    <property type="match status" value="2"/>
</dbReference>
<dbReference type="SUPFAM" id="SSF52540">
    <property type="entry name" value="P-loop containing nucleoside triphosphate hydrolases"/>
    <property type="match status" value="1"/>
</dbReference>
<dbReference type="SUPFAM" id="SSF54211">
    <property type="entry name" value="Ribosomal protein S5 domain 2-like"/>
    <property type="match status" value="1"/>
</dbReference>
<dbReference type="SUPFAM" id="SSF50447">
    <property type="entry name" value="Translation proteins"/>
    <property type="match status" value="1"/>
</dbReference>
<dbReference type="PROSITE" id="PS00301">
    <property type="entry name" value="G_TR_1"/>
    <property type="match status" value="1"/>
</dbReference>
<dbReference type="PROSITE" id="PS51722">
    <property type="entry name" value="G_TR_2"/>
    <property type="match status" value="1"/>
</dbReference>
<accession>P09604</accession>
<accession>A6UQ13</accession>
<gene>
    <name type="primary">fusA</name>
    <name type="synonym">fus</name>
    <name type="ordered locus">Mevan_0679</name>
</gene>
<proteinExistence type="inferred from homology"/>
<feature type="chain" id="PRO_0000091038" description="Elongation factor 2">
    <location>
        <begin position="1"/>
        <end position="727"/>
    </location>
</feature>
<feature type="domain" description="tr-type G">
    <location>
        <begin position="19"/>
        <end position="260"/>
    </location>
</feature>
<feature type="binding site" evidence="1">
    <location>
        <begin position="28"/>
        <end position="35"/>
    </location>
    <ligand>
        <name>GTP</name>
        <dbReference type="ChEBI" id="CHEBI:37565"/>
    </ligand>
</feature>
<feature type="binding site" evidence="1">
    <location>
        <begin position="94"/>
        <end position="98"/>
    </location>
    <ligand>
        <name>GTP</name>
        <dbReference type="ChEBI" id="CHEBI:37565"/>
    </ligand>
</feature>
<feature type="binding site" evidence="1">
    <location>
        <begin position="148"/>
        <end position="151"/>
    </location>
    <ligand>
        <name>GTP</name>
        <dbReference type="ChEBI" id="CHEBI:37565"/>
    </ligand>
</feature>
<feature type="modified residue" description="Diphthamide" evidence="1">
    <location>
        <position position="603"/>
    </location>
</feature>
<feature type="sequence conflict" description="In Ref. 1; CAA30941." evidence="2" ref="1">
    <original>D</original>
    <variation>A</variation>
    <location>
        <position position="31"/>
    </location>
</feature>
<feature type="sequence conflict" description="In Ref. 1; CAA30941." evidence="2" ref="1">
    <original>N</original>
    <variation>D</variation>
    <location>
        <position position="449"/>
    </location>
</feature>
<name>EF2_METVS</name>
<evidence type="ECO:0000250" key="1"/>
<evidence type="ECO:0000305" key="2"/>
<sequence>MGRRAKMVEKVKSLMETHDQIRNMGICAHIDHGKTTLSDNLLAGAGMISKDLAGDQLALDFDEEEAARGITIYAANVSMVHEYNGKEYLINLIDTPGHVDFGGDVTRAMRAIDGAVVVCCAVEGVMPQTETVLRQALKEKVKPVLFINKVDRLINELKLTPEELQGRFMKIIAEVNKLIEKMAPEEFKKEWLCDVVTGKVAFGSAYNNWAISVPYMQKSGISFKDIIDYCEQEKQSELADKAPLHEVILDMAIKHLPNPLQAQKYRIPNIWKGDAESEVGKSMAMCDPNGPLAGVVTKIIVDKHAGSISACRLFSGRIKQGDELYLVGSKQKARAQQVAIFMGAERVQVPSISAGNICALTGLREATAGETVCSPSKILEPGFESLTHTSEPVITVAIEAKNTKDLPKLIEILRQIGREDNTVRIEINEETGEHLISGMGELHIEVITNTKIGRDGGIEVDVGEPIIVYRETITGTSPEIEGKSPNKHNKLYMIAEPMEESVYAAYVEGKIHDEDFKKKTNVDAETRLIEAGLEREQAKKVMSIYNGNMIVNMTKGIVQLDEARELIIEGFKEGVKGGPLASERAQGVKIKLIDATFHEDAIHRGPSQIIPAIRFGVRDAVSSAKPILLEPMQKIYINTPQDYMGDAIREINNRRGQIVDMEQEGDMAIIKGSVPVAEMFGFAGAIRGATQGRCLWSVEFSGFERVPNEIQTKVVAQIRDRKGLKSE</sequence>
<protein>
    <recommendedName>
        <fullName>Elongation factor 2</fullName>
        <shortName>EF-2</shortName>
    </recommendedName>
</protein>
<organism>
    <name type="scientific">Methanococcus vannielii (strain ATCC 35089 / DSM 1224 / JCM 13029 / OCM 148 / SB)</name>
    <dbReference type="NCBI Taxonomy" id="406327"/>
    <lineage>
        <taxon>Archaea</taxon>
        <taxon>Methanobacteriati</taxon>
        <taxon>Methanobacteriota</taxon>
        <taxon>Methanomada group</taxon>
        <taxon>Methanococci</taxon>
        <taxon>Methanococcales</taxon>
        <taxon>Methanococcaceae</taxon>
        <taxon>Methanococcus</taxon>
    </lineage>
</organism>
<keyword id="KW-0963">Cytoplasm</keyword>
<keyword id="KW-0251">Elongation factor</keyword>
<keyword id="KW-0342">GTP-binding</keyword>
<keyword id="KW-0547">Nucleotide-binding</keyword>
<keyword id="KW-0648">Protein biosynthesis</keyword>
<comment type="function">
    <text evidence="1">Catalyzes the GTP-dependent ribosomal translocation step during translation elongation. During this step, the ribosome changes from the pre-translocational (PRE) to the post-translocational (POST) state as the newly formed A-site-bound peptidyl-tRNA and P-site-bound deacylated tRNA move to the P and E sites, respectively. Catalyzes the coordinated movement of the two tRNA molecules, the mRNA and conformational changes in the ribosome (By similarity).</text>
</comment>
<comment type="subcellular location">
    <subcellularLocation>
        <location evidence="1">Cytoplasm</location>
    </subcellularLocation>
</comment>
<comment type="similarity">
    <text evidence="2">Belongs to the TRAFAC class translation factor GTPase superfamily. Classic translation factor GTPase family. EF-G/EF-2 subfamily.</text>
</comment>